<evidence type="ECO:0000250" key="1"/>
<evidence type="ECO:0000255" key="2">
    <source>
        <dbReference type="PROSITE-ProRule" id="PRU00169"/>
    </source>
</evidence>
<evidence type="ECO:0000255" key="3">
    <source>
        <dbReference type="PROSITE-ProRule" id="PRU01091"/>
    </source>
</evidence>
<keyword id="KW-0963">Cytoplasm</keyword>
<keyword id="KW-0238">DNA-binding</keyword>
<keyword id="KW-0597">Phosphoprotein</keyword>
<keyword id="KW-1185">Reference proteome</keyword>
<keyword id="KW-0716">Sensory transduction</keyword>
<keyword id="KW-0804">Transcription</keyword>
<keyword id="KW-0805">Transcription regulation</keyword>
<keyword id="KW-0902">Two-component regulatory system</keyword>
<accession>Q5HR28</accession>
<proteinExistence type="inferred from homology"/>
<organism>
    <name type="scientific">Staphylococcus epidermidis (strain ATCC 35984 / DSM 28319 / BCRC 17069 / CCUG 31568 / BM 3577 / RP62A)</name>
    <dbReference type="NCBI Taxonomy" id="176279"/>
    <lineage>
        <taxon>Bacteria</taxon>
        <taxon>Bacillati</taxon>
        <taxon>Bacillota</taxon>
        <taxon>Bacilli</taxon>
        <taxon>Bacillales</taxon>
        <taxon>Staphylococcaceae</taxon>
        <taxon>Staphylococcus</taxon>
    </lineage>
</organism>
<dbReference type="EMBL" id="CP000029">
    <property type="protein sequence ID" value="AAW53763.1"/>
    <property type="molecule type" value="Genomic_DNA"/>
</dbReference>
<dbReference type="RefSeq" id="WP_001830352.1">
    <property type="nucleotide sequence ID" value="NC_002976.3"/>
</dbReference>
<dbReference type="SMR" id="Q5HR28"/>
<dbReference type="STRING" id="176279.SERP0365"/>
<dbReference type="GeneID" id="50019368"/>
<dbReference type="KEGG" id="ser:SERP0365"/>
<dbReference type="eggNOG" id="COG0745">
    <property type="taxonomic scope" value="Bacteria"/>
</dbReference>
<dbReference type="HOGENOM" id="CLU_000445_30_4_9"/>
<dbReference type="Proteomes" id="UP000000531">
    <property type="component" value="Chromosome"/>
</dbReference>
<dbReference type="GO" id="GO:0005829">
    <property type="term" value="C:cytosol"/>
    <property type="evidence" value="ECO:0007669"/>
    <property type="project" value="TreeGrafter"/>
</dbReference>
<dbReference type="GO" id="GO:0032993">
    <property type="term" value="C:protein-DNA complex"/>
    <property type="evidence" value="ECO:0007669"/>
    <property type="project" value="TreeGrafter"/>
</dbReference>
<dbReference type="GO" id="GO:0000156">
    <property type="term" value="F:phosphorelay response regulator activity"/>
    <property type="evidence" value="ECO:0007669"/>
    <property type="project" value="TreeGrafter"/>
</dbReference>
<dbReference type="GO" id="GO:0000976">
    <property type="term" value="F:transcription cis-regulatory region binding"/>
    <property type="evidence" value="ECO:0007669"/>
    <property type="project" value="TreeGrafter"/>
</dbReference>
<dbReference type="GO" id="GO:0006355">
    <property type="term" value="P:regulation of DNA-templated transcription"/>
    <property type="evidence" value="ECO:0007669"/>
    <property type="project" value="InterPro"/>
</dbReference>
<dbReference type="GO" id="GO:0010468">
    <property type="term" value="P:regulation of gene expression"/>
    <property type="evidence" value="ECO:0000314"/>
    <property type="project" value="CACAO"/>
</dbReference>
<dbReference type="CDD" id="cd17574">
    <property type="entry name" value="REC_OmpR"/>
    <property type="match status" value="1"/>
</dbReference>
<dbReference type="CDD" id="cd00383">
    <property type="entry name" value="trans_reg_C"/>
    <property type="match status" value="1"/>
</dbReference>
<dbReference type="FunFam" id="1.10.10.10:FF:000018">
    <property type="entry name" value="DNA-binding response regulator ResD"/>
    <property type="match status" value="1"/>
</dbReference>
<dbReference type="Gene3D" id="3.40.50.2300">
    <property type="match status" value="1"/>
</dbReference>
<dbReference type="Gene3D" id="1.10.10.10">
    <property type="entry name" value="Winged helix-like DNA-binding domain superfamily/Winged helix DNA-binding domain"/>
    <property type="match status" value="1"/>
</dbReference>
<dbReference type="InterPro" id="IPR011006">
    <property type="entry name" value="CheY-like_superfamily"/>
</dbReference>
<dbReference type="InterPro" id="IPR001867">
    <property type="entry name" value="OmpR/PhoB-type_DNA-bd"/>
</dbReference>
<dbReference type="InterPro" id="IPR001789">
    <property type="entry name" value="Sig_transdc_resp-reg_receiver"/>
</dbReference>
<dbReference type="InterPro" id="IPR039420">
    <property type="entry name" value="WalR-like"/>
</dbReference>
<dbReference type="InterPro" id="IPR036388">
    <property type="entry name" value="WH-like_DNA-bd_sf"/>
</dbReference>
<dbReference type="PANTHER" id="PTHR48111">
    <property type="entry name" value="REGULATOR OF RPOS"/>
    <property type="match status" value="1"/>
</dbReference>
<dbReference type="PANTHER" id="PTHR48111:SF2">
    <property type="entry name" value="RESPONSE REGULATOR SAER"/>
    <property type="match status" value="1"/>
</dbReference>
<dbReference type="Pfam" id="PF00072">
    <property type="entry name" value="Response_reg"/>
    <property type="match status" value="1"/>
</dbReference>
<dbReference type="Pfam" id="PF00486">
    <property type="entry name" value="Trans_reg_C"/>
    <property type="match status" value="1"/>
</dbReference>
<dbReference type="SMART" id="SM00448">
    <property type="entry name" value="REC"/>
    <property type="match status" value="1"/>
</dbReference>
<dbReference type="SMART" id="SM00862">
    <property type="entry name" value="Trans_reg_C"/>
    <property type="match status" value="1"/>
</dbReference>
<dbReference type="SUPFAM" id="SSF52172">
    <property type="entry name" value="CheY-like"/>
    <property type="match status" value="1"/>
</dbReference>
<dbReference type="PROSITE" id="PS51755">
    <property type="entry name" value="OMPR_PHOB"/>
    <property type="match status" value="1"/>
</dbReference>
<dbReference type="PROSITE" id="PS50110">
    <property type="entry name" value="RESPONSE_REGULATORY"/>
    <property type="match status" value="1"/>
</dbReference>
<reference key="1">
    <citation type="journal article" date="2005" name="J. Bacteriol.">
        <title>Insights on evolution of virulence and resistance from the complete genome analysis of an early methicillin-resistant Staphylococcus aureus strain and a biofilm-producing methicillin-resistant Staphylococcus epidermidis strain.</title>
        <authorList>
            <person name="Gill S.R."/>
            <person name="Fouts D.E."/>
            <person name="Archer G.L."/>
            <person name="Mongodin E.F."/>
            <person name="DeBoy R.T."/>
            <person name="Ravel J."/>
            <person name="Paulsen I.T."/>
            <person name="Kolonay J.F."/>
            <person name="Brinkac L.M."/>
            <person name="Beanan M.J."/>
            <person name="Dodson R.J."/>
            <person name="Daugherty S.C."/>
            <person name="Madupu R."/>
            <person name="Angiuoli S.V."/>
            <person name="Durkin A.S."/>
            <person name="Haft D.H."/>
            <person name="Vamathevan J.J."/>
            <person name="Khouri H."/>
            <person name="Utterback T.R."/>
            <person name="Lee C."/>
            <person name="Dimitrov G."/>
            <person name="Jiang L."/>
            <person name="Qin H."/>
            <person name="Weidman J."/>
            <person name="Tran K."/>
            <person name="Kang K.H."/>
            <person name="Hance I.R."/>
            <person name="Nelson K.E."/>
            <person name="Fraser C.M."/>
        </authorList>
    </citation>
    <scope>NUCLEOTIDE SEQUENCE [LARGE SCALE GENOMIC DNA]</scope>
    <source>
        <strain>ATCC 35984 / DSM 28319 / BCRC 17069 / CCUG 31568 / BM 3577 / RP62A</strain>
    </source>
</reference>
<gene>
    <name type="primary">saeR</name>
    <name type="ordered locus">SERP0365</name>
</gene>
<comment type="function">
    <text evidence="1">Member of the two-component regulatory system SaeR/SaeS. Probably functions as a transcriptional regulator via a specific DNA-binding domain, recognizing motifs near the promoter sequences of target genes (By similarity).</text>
</comment>
<comment type="subcellular location">
    <subcellularLocation>
        <location evidence="1">Cytoplasm</location>
    </subcellularLocation>
</comment>
<comment type="PTM">
    <text evidence="1">Phosphorylated by SaeS.</text>
</comment>
<protein>
    <recommendedName>
        <fullName>Response regulator SaeR</fullName>
    </recommendedName>
</protein>
<name>SAER_STAEQ</name>
<feature type="chain" id="PRO_0000295928" description="Response regulator SaeR">
    <location>
        <begin position="1"/>
        <end position="229"/>
    </location>
</feature>
<feature type="domain" description="Response regulatory" evidence="2">
    <location>
        <begin position="3"/>
        <end position="116"/>
    </location>
</feature>
<feature type="DNA-binding region" description="OmpR/PhoB-type" evidence="3">
    <location>
        <begin position="128"/>
        <end position="227"/>
    </location>
</feature>
<feature type="modified residue" description="4-aspartylphosphate" evidence="2">
    <location>
        <position position="51"/>
    </location>
</feature>
<sequence>MTHLLIVDDEKDIVDICQTYFEYEGYQVTTTTCGKEALKLLSSDIDIMILDIMMPEVSGYDIVKKMKDMQLDIPFIYLTAKTQEHDTIYALTLGADDYIKKPFSPRELVLRTNNLLARMSKSNHSNKIEQLEFDGLVLKNLSKTLTINNIEIPMRIKEFELLWYLASREGEVISKSELLEKVWGYDYYEDANTVNVHIHRIREKLEKHDFLPYTITTVWGLGYKFERSR</sequence>